<protein>
    <recommendedName>
        <fullName evidence="1">Threonylcarbamoyl-AMP synthase</fullName>
        <shortName evidence="1">TC-AMP synthase</shortName>
        <ecNumber evidence="1">2.7.7.87</ecNumber>
    </recommendedName>
    <alternativeName>
        <fullName evidence="1">L-threonylcarbamoyladenylate synthase</fullName>
    </alternativeName>
    <alternativeName>
        <fullName evidence="1">t(6)A37 threonylcarbamoyladenosine biosynthesis protein TsaC</fullName>
    </alternativeName>
    <alternativeName>
        <fullName evidence="1">tRNA threonylcarbamoyladenosine biosynthesis protein TsaC</fullName>
    </alternativeName>
</protein>
<accession>A9R933</accession>
<sequence length="190" mass="21153">MNQQENNFVLADIVRALRQEEVIAYPTEAVFGLGCDPDSEKAVNTLLALKQRPWQKGLILVAANYAQLEPYINDSMLNEIQRETLFSTWPGPITWVIPARVETPQWLTGCFDSLAVRVSNHPLVQQLCAEYGKPLVSTSANLSGHEPCRTEEEVRIQFGPSLPVLSGHVGGRLNPSEIRDALTGKRFRQG</sequence>
<feature type="chain" id="PRO_0000353024" description="Threonylcarbamoyl-AMP synthase">
    <location>
        <begin position="1"/>
        <end position="190"/>
    </location>
</feature>
<feature type="domain" description="YrdC-like" evidence="1">
    <location>
        <begin position="7"/>
        <end position="190"/>
    </location>
</feature>
<organism>
    <name type="scientific">Yersinia pestis bv. Antiqua (strain Angola)</name>
    <dbReference type="NCBI Taxonomy" id="349746"/>
    <lineage>
        <taxon>Bacteria</taxon>
        <taxon>Pseudomonadati</taxon>
        <taxon>Pseudomonadota</taxon>
        <taxon>Gammaproteobacteria</taxon>
        <taxon>Enterobacterales</taxon>
        <taxon>Yersiniaceae</taxon>
        <taxon>Yersinia</taxon>
    </lineage>
</organism>
<comment type="function">
    <text evidence="1">Required for the formation of a threonylcarbamoyl group on adenosine at position 37 (t(6)A37) in tRNAs that read codons beginning with adenine. Catalyzes the conversion of L-threonine, HCO(3)(-)/CO(2) and ATP to give threonylcarbamoyl-AMP (TC-AMP) as the acyladenylate intermediate, with the release of diphosphate.</text>
</comment>
<comment type="catalytic activity">
    <reaction evidence="1">
        <text>L-threonine + hydrogencarbonate + ATP = L-threonylcarbamoyladenylate + diphosphate + H2O</text>
        <dbReference type="Rhea" id="RHEA:36407"/>
        <dbReference type="ChEBI" id="CHEBI:15377"/>
        <dbReference type="ChEBI" id="CHEBI:17544"/>
        <dbReference type="ChEBI" id="CHEBI:30616"/>
        <dbReference type="ChEBI" id="CHEBI:33019"/>
        <dbReference type="ChEBI" id="CHEBI:57926"/>
        <dbReference type="ChEBI" id="CHEBI:73682"/>
        <dbReference type="EC" id="2.7.7.87"/>
    </reaction>
</comment>
<comment type="subcellular location">
    <subcellularLocation>
        <location evidence="1">Cytoplasm</location>
    </subcellularLocation>
</comment>
<comment type="similarity">
    <text evidence="1">Belongs to the SUA5 family. TsaC subfamily.</text>
</comment>
<name>TSAC_YERPG</name>
<reference key="1">
    <citation type="journal article" date="2010" name="J. Bacteriol.">
        <title>Genome sequence of the deep-rooted Yersinia pestis strain Angola reveals new insights into the evolution and pangenome of the plague bacterium.</title>
        <authorList>
            <person name="Eppinger M."/>
            <person name="Worsham P.L."/>
            <person name="Nikolich M.P."/>
            <person name="Riley D.R."/>
            <person name="Sebastian Y."/>
            <person name="Mou S."/>
            <person name="Achtman M."/>
            <person name="Lindler L.E."/>
            <person name="Ravel J."/>
        </authorList>
    </citation>
    <scope>NUCLEOTIDE SEQUENCE [LARGE SCALE GENOMIC DNA]</scope>
    <source>
        <strain>Angola</strain>
    </source>
</reference>
<keyword id="KW-0067">ATP-binding</keyword>
<keyword id="KW-0963">Cytoplasm</keyword>
<keyword id="KW-0547">Nucleotide-binding</keyword>
<keyword id="KW-0548">Nucleotidyltransferase</keyword>
<keyword id="KW-0808">Transferase</keyword>
<keyword id="KW-0819">tRNA processing</keyword>
<evidence type="ECO:0000255" key="1">
    <source>
        <dbReference type="HAMAP-Rule" id="MF_01852"/>
    </source>
</evidence>
<proteinExistence type="inferred from homology"/>
<dbReference type="EC" id="2.7.7.87" evidence="1"/>
<dbReference type="EMBL" id="CP000901">
    <property type="protein sequence ID" value="ABX88046.1"/>
    <property type="molecule type" value="Genomic_DNA"/>
</dbReference>
<dbReference type="RefSeq" id="WP_002209025.1">
    <property type="nucleotide sequence ID" value="NZ_CP009935.1"/>
</dbReference>
<dbReference type="SMR" id="A9R933"/>
<dbReference type="GeneID" id="57974358"/>
<dbReference type="KEGG" id="ypg:YpAngola_A0621"/>
<dbReference type="PATRIC" id="fig|349746.12.peg.1573"/>
<dbReference type="GO" id="GO:0005737">
    <property type="term" value="C:cytoplasm"/>
    <property type="evidence" value="ECO:0007669"/>
    <property type="project" value="UniProtKB-SubCell"/>
</dbReference>
<dbReference type="GO" id="GO:0005524">
    <property type="term" value="F:ATP binding"/>
    <property type="evidence" value="ECO:0007669"/>
    <property type="project" value="UniProtKB-UniRule"/>
</dbReference>
<dbReference type="GO" id="GO:0003725">
    <property type="term" value="F:double-stranded RNA binding"/>
    <property type="evidence" value="ECO:0007669"/>
    <property type="project" value="InterPro"/>
</dbReference>
<dbReference type="GO" id="GO:0061710">
    <property type="term" value="F:L-threonylcarbamoyladenylate synthase"/>
    <property type="evidence" value="ECO:0007669"/>
    <property type="project" value="UniProtKB-EC"/>
</dbReference>
<dbReference type="GO" id="GO:0000049">
    <property type="term" value="F:tRNA binding"/>
    <property type="evidence" value="ECO:0007669"/>
    <property type="project" value="TreeGrafter"/>
</dbReference>
<dbReference type="GO" id="GO:0006450">
    <property type="term" value="P:regulation of translational fidelity"/>
    <property type="evidence" value="ECO:0007669"/>
    <property type="project" value="TreeGrafter"/>
</dbReference>
<dbReference type="GO" id="GO:0002949">
    <property type="term" value="P:tRNA threonylcarbamoyladenosine modification"/>
    <property type="evidence" value="ECO:0007669"/>
    <property type="project" value="UniProtKB-UniRule"/>
</dbReference>
<dbReference type="FunFam" id="3.90.870.10:FF:000004">
    <property type="entry name" value="Threonylcarbamoyl-AMP synthase"/>
    <property type="match status" value="1"/>
</dbReference>
<dbReference type="Gene3D" id="3.90.870.10">
    <property type="entry name" value="DHBP synthase"/>
    <property type="match status" value="1"/>
</dbReference>
<dbReference type="HAMAP" id="MF_01852">
    <property type="entry name" value="TsaC"/>
    <property type="match status" value="1"/>
</dbReference>
<dbReference type="InterPro" id="IPR017945">
    <property type="entry name" value="DHBP_synth_RibB-like_a/b_dom"/>
</dbReference>
<dbReference type="InterPro" id="IPR006070">
    <property type="entry name" value="Sua5-like_dom"/>
</dbReference>
<dbReference type="InterPro" id="IPR023535">
    <property type="entry name" value="TC-AMP_synthase"/>
</dbReference>
<dbReference type="InterPro" id="IPR050156">
    <property type="entry name" value="TC-AMP_synthase_SUA5"/>
</dbReference>
<dbReference type="NCBIfam" id="NF007919">
    <property type="entry name" value="PRK10634.1"/>
    <property type="match status" value="1"/>
</dbReference>
<dbReference type="PANTHER" id="PTHR17490">
    <property type="entry name" value="SUA5"/>
    <property type="match status" value="1"/>
</dbReference>
<dbReference type="PANTHER" id="PTHR17490:SF18">
    <property type="entry name" value="THREONYLCARBAMOYL-AMP SYNTHASE"/>
    <property type="match status" value="1"/>
</dbReference>
<dbReference type="Pfam" id="PF01300">
    <property type="entry name" value="Sua5_yciO_yrdC"/>
    <property type="match status" value="1"/>
</dbReference>
<dbReference type="SUPFAM" id="SSF55821">
    <property type="entry name" value="YrdC/RibB"/>
    <property type="match status" value="1"/>
</dbReference>
<dbReference type="PROSITE" id="PS51163">
    <property type="entry name" value="YRDC"/>
    <property type="match status" value="1"/>
</dbReference>
<gene>
    <name evidence="1" type="primary">tsaC</name>
    <name type="synonym">rimN</name>
    <name type="ordered locus">YpAngola_A0621</name>
</gene>